<evidence type="ECO:0000305" key="1"/>
<name>SMS_LAMFL</name>
<organism>
    <name type="scientific">Lampetra fluviatilis</name>
    <name type="common">European river lamprey</name>
    <name type="synonym">Petromyzon fluviatilis</name>
    <dbReference type="NCBI Taxonomy" id="7748"/>
    <lineage>
        <taxon>Eukaryota</taxon>
        <taxon>Metazoa</taxon>
        <taxon>Chordata</taxon>
        <taxon>Craniata</taxon>
        <taxon>Vertebrata</taxon>
        <taxon>Cyclostomata</taxon>
        <taxon>Hyperoartia</taxon>
        <taxon>Petromyzontiformes</taxon>
        <taxon>Petromyzontidae</taxon>
        <taxon>Lampetra</taxon>
    </lineage>
</organism>
<comment type="function">
    <text>Somatostatin inhibits the release of somatotropin.</text>
</comment>
<comment type="subcellular location">
    <subcellularLocation>
        <location>Secreted</location>
    </subcellularLocation>
</comment>
<comment type="similarity">
    <text evidence="1">Belongs to the somatostatin family.</text>
</comment>
<feature type="peptide" id="PRO_0000033128" description="Somatostatin-35">
    <location>
        <begin position="1"/>
        <end position="35"/>
    </location>
</feature>
<feature type="peptide" id="PRO_0000033129" description="Somatostatin-14">
    <location>
        <begin position="22"/>
        <end position="35"/>
    </location>
</feature>
<feature type="disulfide bond">
    <location>
        <begin position="24"/>
        <end position="35"/>
    </location>
</feature>
<feature type="non-terminal residue">
    <location>
        <position position="1"/>
    </location>
</feature>
<dbReference type="GO" id="GO:0005576">
    <property type="term" value="C:extracellular region"/>
    <property type="evidence" value="ECO:0007669"/>
    <property type="project" value="UniProtKB-SubCell"/>
</dbReference>
<dbReference type="GO" id="GO:0005179">
    <property type="term" value="F:hormone activity"/>
    <property type="evidence" value="ECO:0007669"/>
    <property type="project" value="UniProtKB-KW"/>
</dbReference>
<dbReference type="InterPro" id="IPR018142">
    <property type="entry name" value="Somatostatin/Cortistatin_C"/>
</dbReference>
<dbReference type="Pfam" id="PF03002">
    <property type="entry name" value="Somatostatin"/>
    <property type="match status" value="1"/>
</dbReference>
<keyword id="KW-0165">Cleavage on pair of basic residues</keyword>
<keyword id="KW-0903">Direct protein sequencing</keyword>
<keyword id="KW-1015">Disulfide bond</keyword>
<keyword id="KW-0372">Hormone</keyword>
<keyword id="KW-0964">Secreted</keyword>
<accession>Q9PRR0</accession>
<sequence>AAAAPGAAGGAQLPLGNRERKAGCKNFFWKTFSSC</sequence>
<reference key="1">
    <citation type="journal article" date="1995" name="Gen. Comp. Endocrinol.">
        <title>Characterization of insulin, glucagon, and somatostatin from the river lamprey, Lampetra fluviatilis.</title>
        <authorList>
            <person name="Conlon J.M."/>
            <person name="Bondareva V."/>
            <person name="Rusakov Y."/>
            <person name="Plisetskaya E.M."/>
            <person name="Mynarcik D.C."/>
            <person name="Whittaker J."/>
        </authorList>
    </citation>
    <scope>PROTEIN SEQUENCE</scope>
    <source>
        <tissue>Pancreas</tissue>
    </source>
</reference>
<proteinExistence type="evidence at protein level"/>
<protein>
    <recommendedName>
        <fullName>Somatostatin</fullName>
    </recommendedName>
    <component>
        <recommendedName>
            <fullName>Somatostatin-35</fullName>
        </recommendedName>
    </component>
    <component>
        <recommendedName>
            <fullName>Somatostatin-14</fullName>
        </recommendedName>
    </component>
</protein>
<gene>
    <name type="primary">sst</name>
</gene>